<evidence type="ECO:0000255" key="1">
    <source>
        <dbReference type="HAMAP-Rule" id="MF_00137"/>
    </source>
</evidence>
<feature type="chain" id="PRO_1000018761" description="Phosphoribosylaminoimidazole-succinocarboxamide synthase">
    <location>
        <begin position="1"/>
        <end position="236"/>
    </location>
</feature>
<comment type="catalytic activity">
    <reaction evidence="1">
        <text>5-amino-1-(5-phospho-D-ribosyl)imidazole-4-carboxylate + L-aspartate + ATP = (2S)-2-[5-amino-1-(5-phospho-beta-D-ribosyl)imidazole-4-carboxamido]succinate + ADP + phosphate + 2 H(+)</text>
        <dbReference type="Rhea" id="RHEA:22628"/>
        <dbReference type="ChEBI" id="CHEBI:15378"/>
        <dbReference type="ChEBI" id="CHEBI:29991"/>
        <dbReference type="ChEBI" id="CHEBI:30616"/>
        <dbReference type="ChEBI" id="CHEBI:43474"/>
        <dbReference type="ChEBI" id="CHEBI:58443"/>
        <dbReference type="ChEBI" id="CHEBI:77657"/>
        <dbReference type="ChEBI" id="CHEBI:456216"/>
        <dbReference type="EC" id="6.3.2.6"/>
    </reaction>
</comment>
<comment type="pathway">
    <text evidence="1">Purine metabolism; IMP biosynthesis via de novo pathway; 5-amino-1-(5-phospho-D-ribosyl)imidazole-4-carboxamide from 5-amino-1-(5-phospho-D-ribosyl)imidazole-4-carboxylate: step 1/2.</text>
</comment>
<comment type="similarity">
    <text evidence="1">Belongs to the SAICAR synthetase family.</text>
</comment>
<reference key="1">
    <citation type="journal article" date="2005" name="Proc. Natl. Acad. Sci. U.S.A.">
        <title>Comparison of the complete genome sequences of Pseudomonas syringae pv. syringae B728a and pv. tomato DC3000.</title>
        <authorList>
            <person name="Feil H."/>
            <person name="Feil W.S."/>
            <person name="Chain P."/>
            <person name="Larimer F."/>
            <person name="Dibartolo G."/>
            <person name="Copeland A."/>
            <person name="Lykidis A."/>
            <person name="Trong S."/>
            <person name="Nolan M."/>
            <person name="Goltsman E."/>
            <person name="Thiel J."/>
            <person name="Malfatti S."/>
            <person name="Loper J.E."/>
            <person name="Lapidus A."/>
            <person name="Detter J.C."/>
            <person name="Land M."/>
            <person name="Richardson P.M."/>
            <person name="Kyrpides N.C."/>
            <person name="Ivanova N."/>
            <person name="Lindow S.E."/>
        </authorList>
    </citation>
    <scope>NUCLEOTIDE SEQUENCE [LARGE SCALE GENOMIC DNA]</scope>
    <source>
        <strain>B728a</strain>
    </source>
</reference>
<sequence length="236" mass="26937">MEKREELYRGKAKSVYKTDDADRLILLFRNDTSAFDGKRIEQLDRKGMVNNKFNAFIMQKLEEAGIPTQFDKLLGDNECLVKKLDMIPVECVVRNYAAGSLVKRLGIEEGTRLNPYTFELFLKDDAKGDPFINESHVVAFGWGTAEQLARMKELSIKVNDVLTKLFDDAGLLLVDFKLEFGVFHGEIVLGDEFSPDGCRLWDKDTRKKMDKDRFRQGLGDVIEAYEEVANRLGVPL</sequence>
<keyword id="KW-0067">ATP-binding</keyword>
<keyword id="KW-0436">Ligase</keyword>
<keyword id="KW-0547">Nucleotide-binding</keyword>
<keyword id="KW-0658">Purine biosynthesis</keyword>
<protein>
    <recommendedName>
        <fullName evidence="1">Phosphoribosylaminoimidazole-succinocarboxamide synthase</fullName>
        <ecNumber evidence="1">6.3.2.6</ecNumber>
    </recommendedName>
    <alternativeName>
        <fullName evidence="1">SAICAR synthetase</fullName>
    </alternativeName>
</protein>
<dbReference type="EC" id="6.3.2.6" evidence="1"/>
<dbReference type="EMBL" id="CP000075">
    <property type="protein sequence ID" value="AAY36600.1"/>
    <property type="molecule type" value="Genomic_DNA"/>
</dbReference>
<dbReference type="RefSeq" id="WP_011267089.1">
    <property type="nucleotide sequence ID" value="NC_007005.1"/>
</dbReference>
<dbReference type="RefSeq" id="YP_234638.1">
    <property type="nucleotide sequence ID" value="NC_007005.1"/>
</dbReference>
<dbReference type="SMR" id="Q4ZW72"/>
<dbReference type="STRING" id="205918.Psyr_1551"/>
<dbReference type="KEGG" id="psb:Psyr_1551"/>
<dbReference type="PATRIC" id="fig|205918.7.peg.1586"/>
<dbReference type="eggNOG" id="COG0152">
    <property type="taxonomic scope" value="Bacteria"/>
</dbReference>
<dbReference type="HOGENOM" id="CLU_061495_2_1_6"/>
<dbReference type="OrthoDB" id="9801549at2"/>
<dbReference type="UniPathway" id="UPA00074">
    <property type="reaction ID" value="UER00131"/>
</dbReference>
<dbReference type="Proteomes" id="UP000000426">
    <property type="component" value="Chromosome"/>
</dbReference>
<dbReference type="GO" id="GO:0005829">
    <property type="term" value="C:cytosol"/>
    <property type="evidence" value="ECO:0007669"/>
    <property type="project" value="TreeGrafter"/>
</dbReference>
<dbReference type="GO" id="GO:0005524">
    <property type="term" value="F:ATP binding"/>
    <property type="evidence" value="ECO:0007669"/>
    <property type="project" value="UniProtKB-KW"/>
</dbReference>
<dbReference type="GO" id="GO:0004639">
    <property type="term" value="F:phosphoribosylaminoimidazolesuccinocarboxamide synthase activity"/>
    <property type="evidence" value="ECO:0007669"/>
    <property type="project" value="UniProtKB-UniRule"/>
</dbReference>
<dbReference type="GO" id="GO:0006189">
    <property type="term" value="P:'de novo' IMP biosynthetic process"/>
    <property type="evidence" value="ECO:0007669"/>
    <property type="project" value="UniProtKB-UniRule"/>
</dbReference>
<dbReference type="GO" id="GO:0009236">
    <property type="term" value="P:cobalamin biosynthetic process"/>
    <property type="evidence" value="ECO:0007669"/>
    <property type="project" value="InterPro"/>
</dbReference>
<dbReference type="CDD" id="cd01415">
    <property type="entry name" value="SAICAR_synt_PurC"/>
    <property type="match status" value="1"/>
</dbReference>
<dbReference type="FunFam" id="3.30.200.20:FF:000086">
    <property type="entry name" value="Phosphoribosylaminoimidazole-succinocarboxamide synthase"/>
    <property type="match status" value="1"/>
</dbReference>
<dbReference type="FunFam" id="3.30.470.20:FF:000006">
    <property type="entry name" value="Phosphoribosylaminoimidazole-succinocarboxamide synthase"/>
    <property type="match status" value="1"/>
</dbReference>
<dbReference type="Gene3D" id="3.30.470.20">
    <property type="entry name" value="ATP-grasp fold, B domain"/>
    <property type="match status" value="1"/>
</dbReference>
<dbReference type="Gene3D" id="3.30.200.20">
    <property type="entry name" value="Phosphorylase Kinase, domain 1"/>
    <property type="match status" value="1"/>
</dbReference>
<dbReference type="HAMAP" id="MF_00137">
    <property type="entry name" value="SAICAR_synth"/>
    <property type="match status" value="1"/>
</dbReference>
<dbReference type="InterPro" id="IPR028923">
    <property type="entry name" value="SAICAR_synt/ADE2_N"/>
</dbReference>
<dbReference type="InterPro" id="IPR033934">
    <property type="entry name" value="SAICAR_synt_PurC"/>
</dbReference>
<dbReference type="InterPro" id="IPR001636">
    <property type="entry name" value="SAICAR_synth"/>
</dbReference>
<dbReference type="InterPro" id="IPR050089">
    <property type="entry name" value="SAICAR_synthetase"/>
</dbReference>
<dbReference type="InterPro" id="IPR018236">
    <property type="entry name" value="SAICAR_synthetase_CS"/>
</dbReference>
<dbReference type="NCBIfam" id="TIGR00081">
    <property type="entry name" value="purC"/>
    <property type="match status" value="1"/>
</dbReference>
<dbReference type="PANTHER" id="PTHR43599">
    <property type="entry name" value="MULTIFUNCTIONAL PROTEIN ADE2"/>
    <property type="match status" value="1"/>
</dbReference>
<dbReference type="PANTHER" id="PTHR43599:SF3">
    <property type="entry name" value="SI:DKEY-6E2.2"/>
    <property type="match status" value="1"/>
</dbReference>
<dbReference type="Pfam" id="PF01259">
    <property type="entry name" value="SAICAR_synt"/>
    <property type="match status" value="1"/>
</dbReference>
<dbReference type="SUPFAM" id="SSF56104">
    <property type="entry name" value="SAICAR synthase-like"/>
    <property type="match status" value="1"/>
</dbReference>
<dbReference type="PROSITE" id="PS01057">
    <property type="entry name" value="SAICAR_SYNTHETASE_1"/>
    <property type="match status" value="1"/>
</dbReference>
<dbReference type="PROSITE" id="PS01058">
    <property type="entry name" value="SAICAR_SYNTHETASE_2"/>
    <property type="match status" value="1"/>
</dbReference>
<accession>Q4ZW72</accession>
<proteinExistence type="inferred from homology"/>
<organism>
    <name type="scientific">Pseudomonas syringae pv. syringae (strain B728a)</name>
    <dbReference type="NCBI Taxonomy" id="205918"/>
    <lineage>
        <taxon>Bacteria</taxon>
        <taxon>Pseudomonadati</taxon>
        <taxon>Pseudomonadota</taxon>
        <taxon>Gammaproteobacteria</taxon>
        <taxon>Pseudomonadales</taxon>
        <taxon>Pseudomonadaceae</taxon>
        <taxon>Pseudomonas</taxon>
        <taxon>Pseudomonas syringae</taxon>
    </lineage>
</organism>
<gene>
    <name evidence="1" type="primary">purC</name>
    <name type="ordered locus">Psyr_1551</name>
</gene>
<name>PUR7_PSEU2</name>